<dbReference type="EC" id="2.8.4.3" evidence="1"/>
<dbReference type="EMBL" id="AE017354">
    <property type="protein sequence ID" value="AAU27416.1"/>
    <property type="molecule type" value="Genomic_DNA"/>
</dbReference>
<dbReference type="RefSeq" id="WP_010947064.1">
    <property type="nucleotide sequence ID" value="NC_002942.5"/>
</dbReference>
<dbReference type="RefSeq" id="YP_095363.1">
    <property type="nucleotide sequence ID" value="NC_002942.5"/>
</dbReference>
<dbReference type="SMR" id="Q5ZVV6"/>
<dbReference type="STRING" id="272624.lpg1334"/>
<dbReference type="PaxDb" id="272624-lpg1334"/>
<dbReference type="GeneID" id="57035324"/>
<dbReference type="KEGG" id="lpn:lpg1334"/>
<dbReference type="PATRIC" id="fig|272624.6.peg.1402"/>
<dbReference type="eggNOG" id="COG0621">
    <property type="taxonomic scope" value="Bacteria"/>
</dbReference>
<dbReference type="HOGENOM" id="CLU_018697_2_0_6"/>
<dbReference type="OrthoDB" id="9805215at2"/>
<dbReference type="Proteomes" id="UP000000609">
    <property type="component" value="Chromosome"/>
</dbReference>
<dbReference type="GO" id="GO:0005829">
    <property type="term" value="C:cytosol"/>
    <property type="evidence" value="ECO:0007669"/>
    <property type="project" value="TreeGrafter"/>
</dbReference>
<dbReference type="GO" id="GO:0051539">
    <property type="term" value="F:4 iron, 4 sulfur cluster binding"/>
    <property type="evidence" value="ECO:0007669"/>
    <property type="project" value="UniProtKB-UniRule"/>
</dbReference>
<dbReference type="GO" id="GO:0046872">
    <property type="term" value="F:metal ion binding"/>
    <property type="evidence" value="ECO:0007669"/>
    <property type="project" value="UniProtKB-KW"/>
</dbReference>
<dbReference type="GO" id="GO:0035597">
    <property type="term" value="F:N6-isopentenyladenosine methylthiotransferase activity"/>
    <property type="evidence" value="ECO:0007669"/>
    <property type="project" value="TreeGrafter"/>
</dbReference>
<dbReference type="CDD" id="cd01335">
    <property type="entry name" value="Radical_SAM"/>
    <property type="match status" value="1"/>
</dbReference>
<dbReference type="FunFam" id="3.40.50.12160:FF:000001">
    <property type="entry name" value="tRNA-2-methylthio-N(6)-dimethylallyladenosine synthase"/>
    <property type="match status" value="1"/>
</dbReference>
<dbReference type="FunFam" id="3.80.30.20:FF:000001">
    <property type="entry name" value="tRNA-2-methylthio-N(6)-dimethylallyladenosine synthase 2"/>
    <property type="match status" value="1"/>
</dbReference>
<dbReference type="Gene3D" id="3.40.50.12160">
    <property type="entry name" value="Methylthiotransferase, N-terminal domain"/>
    <property type="match status" value="1"/>
</dbReference>
<dbReference type="Gene3D" id="3.80.30.20">
    <property type="entry name" value="tm_1862 like domain"/>
    <property type="match status" value="1"/>
</dbReference>
<dbReference type="HAMAP" id="MF_01864">
    <property type="entry name" value="tRNA_metthiotr_MiaB"/>
    <property type="match status" value="1"/>
</dbReference>
<dbReference type="InterPro" id="IPR006638">
    <property type="entry name" value="Elp3/MiaA/NifB-like_rSAM"/>
</dbReference>
<dbReference type="InterPro" id="IPR005839">
    <property type="entry name" value="Methylthiotransferase"/>
</dbReference>
<dbReference type="InterPro" id="IPR020612">
    <property type="entry name" value="Methylthiotransferase_CS"/>
</dbReference>
<dbReference type="InterPro" id="IPR013848">
    <property type="entry name" value="Methylthiotransferase_N"/>
</dbReference>
<dbReference type="InterPro" id="IPR038135">
    <property type="entry name" value="Methylthiotransferase_N_sf"/>
</dbReference>
<dbReference type="InterPro" id="IPR006463">
    <property type="entry name" value="MiaB_methiolase"/>
</dbReference>
<dbReference type="InterPro" id="IPR007197">
    <property type="entry name" value="rSAM"/>
</dbReference>
<dbReference type="InterPro" id="IPR023404">
    <property type="entry name" value="rSAM_horseshoe"/>
</dbReference>
<dbReference type="InterPro" id="IPR002792">
    <property type="entry name" value="TRAM_dom"/>
</dbReference>
<dbReference type="NCBIfam" id="TIGR01574">
    <property type="entry name" value="miaB-methiolase"/>
    <property type="match status" value="1"/>
</dbReference>
<dbReference type="NCBIfam" id="TIGR00089">
    <property type="entry name" value="MiaB/RimO family radical SAM methylthiotransferase"/>
    <property type="match status" value="1"/>
</dbReference>
<dbReference type="PANTHER" id="PTHR43020">
    <property type="entry name" value="CDK5 REGULATORY SUBUNIT-ASSOCIATED PROTEIN 1"/>
    <property type="match status" value="1"/>
</dbReference>
<dbReference type="PANTHER" id="PTHR43020:SF2">
    <property type="entry name" value="MITOCHONDRIAL TRNA METHYLTHIOTRANSFERASE CDK5RAP1"/>
    <property type="match status" value="1"/>
</dbReference>
<dbReference type="Pfam" id="PF04055">
    <property type="entry name" value="Radical_SAM"/>
    <property type="match status" value="1"/>
</dbReference>
<dbReference type="Pfam" id="PF01938">
    <property type="entry name" value="TRAM"/>
    <property type="match status" value="1"/>
</dbReference>
<dbReference type="Pfam" id="PF00919">
    <property type="entry name" value="UPF0004"/>
    <property type="match status" value="1"/>
</dbReference>
<dbReference type="SFLD" id="SFLDF00273">
    <property type="entry name" value="(dimethylallyl)adenosine_tRNA"/>
    <property type="match status" value="1"/>
</dbReference>
<dbReference type="SFLD" id="SFLDG01082">
    <property type="entry name" value="B12-binding_domain_containing"/>
    <property type="match status" value="1"/>
</dbReference>
<dbReference type="SFLD" id="SFLDG01061">
    <property type="entry name" value="methylthiotransferase"/>
    <property type="match status" value="1"/>
</dbReference>
<dbReference type="SMART" id="SM00729">
    <property type="entry name" value="Elp3"/>
    <property type="match status" value="1"/>
</dbReference>
<dbReference type="SUPFAM" id="SSF102114">
    <property type="entry name" value="Radical SAM enzymes"/>
    <property type="match status" value="1"/>
</dbReference>
<dbReference type="PROSITE" id="PS51449">
    <property type="entry name" value="MTTASE_N"/>
    <property type="match status" value="1"/>
</dbReference>
<dbReference type="PROSITE" id="PS01278">
    <property type="entry name" value="MTTASE_RADICAL"/>
    <property type="match status" value="1"/>
</dbReference>
<dbReference type="PROSITE" id="PS51918">
    <property type="entry name" value="RADICAL_SAM"/>
    <property type="match status" value="1"/>
</dbReference>
<dbReference type="PROSITE" id="PS50926">
    <property type="entry name" value="TRAM"/>
    <property type="match status" value="1"/>
</dbReference>
<name>MIAB_LEGPH</name>
<protein>
    <recommendedName>
        <fullName evidence="1">tRNA-2-methylthio-N(6)-dimethylallyladenosine synthase</fullName>
        <ecNumber evidence="1">2.8.4.3</ecNumber>
    </recommendedName>
    <alternativeName>
        <fullName evidence="1">(Dimethylallyl)adenosine tRNA methylthiotransferase MiaB</fullName>
    </alternativeName>
    <alternativeName>
        <fullName evidence="1">tRNA-i(6)A37 methylthiotransferase</fullName>
    </alternativeName>
</protein>
<reference key="1">
    <citation type="journal article" date="2004" name="Science">
        <title>The genomic sequence of the accidental pathogen Legionella pneumophila.</title>
        <authorList>
            <person name="Chien M."/>
            <person name="Morozova I."/>
            <person name="Shi S."/>
            <person name="Sheng H."/>
            <person name="Chen J."/>
            <person name="Gomez S.M."/>
            <person name="Asamani G."/>
            <person name="Hill K."/>
            <person name="Nuara J."/>
            <person name="Feder M."/>
            <person name="Rineer J."/>
            <person name="Greenberg J.J."/>
            <person name="Steshenko V."/>
            <person name="Park S.H."/>
            <person name="Zhao B."/>
            <person name="Teplitskaya E."/>
            <person name="Edwards J.R."/>
            <person name="Pampou S."/>
            <person name="Georghiou A."/>
            <person name="Chou I.-C."/>
            <person name="Iannuccilli W."/>
            <person name="Ulz M.E."/>
            <person name="Kim D.H."/>
            <person name="Geringer-Sameth A."/>
            <person name="Goldsberry C."/>
            <person name="Morozov P."/>
            <person name="Fischer S.G."/>
            <person name="Segal G."/>
            <person name="Qu X."/>
            <person name="Rzhetsky A."/>
            <person name="Zhang P."/>
            <person name="Cayanis E."/>
            <person name="De Jong P.J."/>
            <person name="Ju J."/>
            <person name="Kalachikov S."/>
            <person name="Shuman H.A."/>
            <person name="Russo J.J."/>
        </authorList>
    </citation>
    <scope>NUCLEOTIDE SEQUENCE [LARGE SCALE GENOMIC DNA]</scope>
    <source>
        <strain>Philadelphia 1 / ATCC 33152 / DSM 7513</strain>
    </source>
</reference>
<sequence>MVKKLYIKTNGCQMNEYDSSKMAEVLYASHGLVKTDQVEDADVILLNTCSIREKAQEKVFSQLGQWREYKAKNPHVLIGVGGCVASQEGSDIIKRAPFVDIVFGPQTLHRLPALLNERLEKNKSVVDISFPEIEKFDHLPAPRAEGPTAFVSIMEGCSKYCSFCVVPYTRGEEISRPFDDVLAECYQLASQGVREINLLGQNVNDYRGIMDNGDIADLALLIHYIAAIDGIGRIRFTTSHPLAFSENLINAYAEVPELANHLHLPVQSGSDRILSLMKRGYTALEFKSKIRKLRKIRPDIRLSTDIIVGFPGETDKDFQDTMDLVHEIGFDTSFSFIYSPRPGTPAANLPDDTPMEIKKQRLQILQNRLLMNAARYSESMIGSKQKILVTGFSKKSSQQLSGRTECNRVVNFDGPPHLIGQFIDVQISDALPNSLRGRLLEKEMQPA</sequence>
<feature type="chain" id="PRO_0000374356" description="tRNA-2-methylthio-N(6)-dimethylallyladenosine synthase">
    <location>
        <begin position="1"/>
        <end position="447"/>
    </location>
</feature>
<feature type="domain" description="MTTase N-terminal" evidence="1">
    <location>
        <begin position="3"/>
        <end position="120"/>
    </location>
</feature>
<feature type="domain" description="Radical SAM core" evidence="2">
    <location>
        <begin position="143"/>
        <end position="375"/>
    </location>
</feature>
<feature type="domain" description="TRAM" evidence="1">
    <location>
        <begin position="378"/>
        <end position="441"/>
    </location>
</feature>
<feature type="binding site" evidence="1">
    <location>
        <position position="12"/>
    </location>
    <ligand>
        <name>[4Fe-4S] cluster</name>
        <dbReference type="ChEBI" id="CHEBI:49883"/>
        <label>1</label>
    </ligand>
</feature>
<feature type="binding site" evidence="1">
    <location>
        <position position="49"/>
    </location>
    <ligand>
        <name>[4Fe-4S] cluster</name>
        <dbReference type="ChEBI" id="CHEBI:49883"/>
        <label>1</label>
    </ligand>
</feature>
<feature type="binding site" evidence="1">
    <location>
        <position position="83"/>
    </location>
    <ligand>
        <name>[4Fe-4S] cluster</name>
        <dbReference type="ChEBI" id="CHEBI:49883"/>
        <label>1</label>
    </ligand>
</feature>
<feature type="binding site" evidence="1">
    <location>
        <position position="157"/>
    </location>
    <ligand>
        <name>[4Fe-4S] cluster</name>
        <dbReference type="ChEBI" id="CHEBI:49883"/>
        <label>2</label>
        <note>4Fe-4S-S-AdoMet</note>
    </ligand>
</feature>
<feature type="binding site" evidence="1">
    <location>
        <position position="161"/>
    </location>
    <ligand>
        <name>[4Fe-4S] cluster</name>
        <dbReference type="ChEBI" id="CHEBI:49883"/>
        <label>2</label>
        <note>4Fe-4S-S-AdoMet</note>
    </ligand>
</feature>
<feature type="binding site" evidence="1">
    <location>
        <position position="164"/>
    </location>
    <ligand>
        <name>[4Fe-4S] cluster</name>
        <dbReference type="ChEBI" id="CHEBI:49883"/>
        <label>2</label>
        <note>4Fe-4S-S-AdoMet</note>
    </ligand>
</feature>
<organism>
    <name type="scientific">Legionella pneumophila subsp. pneumophila (strain Philadelphia 1 / ATCC 33152 / DSM 7513)</name>
    <dbReference type="NCBI Taxonomy" id="272624"/>
    <lineage>
        <taxon>Bacteria</taxon>
        <taxon>Pseudomonadati</taxon>
        <taxon>Pseudomonadota</taxon>
        <taxon>Gammaproteobacteria</taxon>
        <taxon>Legionellales</taxon>
        <taxon>Legionellaceae</taxon>
        <taxon>Legionella</taxon>
    </lineage>
</organism>
<evidence type="ECO:0000255" key="1">
    <source>
        <dbReference type="HAMAP-Rule" id="MF_01864"/>
    </source>
</evidence>
<evidence type="ECO:0000255" key="2">
    <source>
        <dbReference type="PROSITE-ProRule" id="PRU01266"/>
    </source>
</evidence>
<gene>
    <name evidence="1" type="primary">miaB</name>
    <name type="ordered locus">lpg1334</name>
</gene>
<accession>Q5ZVV6</accession>
<comment type="function">
    <text evidence="1">Catalyzes the methylthiolation of N6-(dimethylallyl)adenosine (i(6)A), leading to the formation of 2-methylthio-N6-(dimethylallyl)adenosine (ms(2)i(6)A) at position 37 in tRNAs that read codons beginning with uridine.</text>
</comment>
<comment type="catalytic activity">
    <reaction evidence="1">
        <text>N(6)-dimethylallyladenosine(37) in tRNA + (sulfur carrier)-SH + AH2 + 2 S-adenosyl-L-methionine = 2-methylsulfanyl-N(6)-dimethylallyladenosine(37) in tRNA + (sulfur carrier)-H + 5'-deoxyadenosine + L-methionine + A + S-adenosyl-L-homocysteine + 2 H(+)</text>
        <dbReference type="Rhea" id="RHEA:37067"/>
        <dbReference type="Rhea" id="RHEA-COMP:10375"/>
        <dbReference type="Rhea" id="RHEA-COMP:10376"/>
        <dbReference type="Rhea" id="RHEA-COMP:14737"/>
        <dbReference type="Rhea" id="RHEA-COMP:14739"/>
        <dbReference type="ChEBI" id="CHEBI:13193"/>
        <dbReference type="ChEBI" id="CHEBI:15378"/>
        <dbReference type="ChEBI" id="CHEBI:17319"/>
        <dbReference type="ChEBI" id="CHEBI:17499"/>
        <dbReference type="ChEBI" id="CHEBI:29917"/>
        <dbReference type="ChEBI" id="CHEBI:57844"/>
        <dbReference type="ChEBI" id="CHEBI:57856"/>
        <dbReference type="ChEBI" id="CHEBI:59789"/>
        <dbReference type="ChEBI" id="CHEBI:64428"/>
        <dbReference type="ChEBI" id="CHEBI:74415"/>
        <dbReference type="ChEBI" id="CHEBI:74417"/>
        <dbReference type="EC" id="2.8.4.3"/>
    </reaction>
</comment>
<comment type="cofactor">
    <cofactor evidence="1">
        <name>[4Fe-4S] cluster</name>
        <dbReference type="ChEBI" id="CHEBI:49883"/>
    </cofactor>
    <text evidence="1">Binds 2 [4Fe-4S] clusters. One cluster is coordinated with 3 cysteines and an exchangeable S-adenosyl-L-methionine.</text>
</comment>
<comment type="subunit">
    <text evidence="1">Monomer.</text>
</comment>
<comment type="subcellular location">
    <subcellularLocation>
        <location evidence="1">Cytoplasm</location>
    </subcellularLocation>
</comment>
<comment type="similarity">
    <text evidence="1">Belongs to the methylthiotransferase family. MiaB subfamily.</text>
</comment>
<keyword id="KW-0004">4Fe-4S</keyword>
<keyword id="KW-0963">Cytoplasm</keyword>
<keyword id="KW-0408">Iron</keyword>
<keyword id="KW-0411">Iron-sulfur</keyword>
<keyword id="KW-0479">Metal-binding</keyword>
<keyword id="KW-1185">Reference proteome</keyword>
<keyword id="KW-0949">S-adenosyl-L-methionine</keyword>
<keyword id="KW-0808">Transferase</keyword>
<keyword id="KW-0819">tRNA processing</keyword>
<proteinExistence type="inferred from homology"/>